<feature type="chain" id="PRO_0000180870" description="Flagella synthesis protein FlgN">
    <location>
        <begin position="1"/>
        <end position="146"/>
    </location>
</feature>
<organism>
    <name type="scientific">Proteus mirabilis</name>
    <dbReference type="NCBI Taxonomy" id="584"/>
    <lineage>
        <taxon>Bacteria</taxon>
        <taxon>Pseudomonadati</taxon>
        <taxon>Pseudomonadota</taxon>
        <taxon>Gammaproteobacteria</taxon>
        <taxon>Enterobacterales</taxon>
        <taxon>Morganellaceae</taxon>
        <taxon>Proteus</taxon>
    </lineage>
</organism>
<comment type="function">
    <text>Required for the efficient initiation of filament assembly.</text>
</comment>
<comment type="subcellular location">
    <subcellularLocation>
        <location evidence="1">Cytoplasm</location>
    </subcellularLocation>
</comment>
<comment type="similarity">
    <text evidence="1">Belongs to the FlgN family.</text>
</comment>
<name>FLGN_PROMI</name>
<protein>
    <recommendedName>
        <fullName>Flagella synthesis protein FlgN</fullName>
    </recommendedName>
</protein>
<dbReference type="EMBL" id="U82214">
    <property type="protein sequence ID" value="AAC45660.1"/>
    <property type="molecule type" value="Genomic_DNA"/>
</dbReference>
<dbReference type="RefSeq" id="WP_004243542.1">
    <property type="nucleotide sequence ID" value="NZ_ABFDCH020000024.1"/>
</dbReference>
<dbReference type="SMR" id="P96975"/>
<dbReference type="STRING" id="584.AOUC001_07285"/>
<dbReference type="PATRIC" id="fig|584.106.peg.2142"/>
<dbReference type="GO" id="GO:0005737">
    <property type="term" value="C:cytoplasm"/>
    <property type="evidence" value="ECO:0007669"/>
    <property type="project" value="UniProtKB-SubCell"/>
</dbReference>
<dbReference type="GO" id="GO:0044780">
    <property type="term" value="P:bacterial-type flagellum assembly"/>
    <property type="evidence" value="ECO:0007669"/>
    <property type="project" value="InterPro"/>
</dbReference>
<dbReference type="Gene3D" id="1.20.58.300">
    <property type="entry name" value="FlgN-like"/>
    <property type="match status" value="1"/>
</dbReference>
<dbReference type="InterPro" id="IPR007809">
    <property type="entry name" value="FlgN-like"/>
</dbReference>
<dbReference type="InterPro" id="IPR036679">
    <property type="entry name" value="FlgN-like_sf"/>
</dbReference>
<dbReference type="Pfam" id="PF05130">
    <property type="entry name" value="FlgN"/>
    <property type="match status" value="1"/>
</dbReference>
<dbReference type="SUPFAM" id="SSF140566">
    <property type="entry name" value="FlgN-like"/>
    <property type="match status" value="1"/>
</dbReference>
<keyword id="KW-1005">Bacterial flagellum biogenesis</keyword>
<keyword id="KW-0963">Cytoplasm</keyword>
<proteinExistence type="inferred from homology"/>
<sequence length="146" mass="16595">MMEELRQTLDLQLSQLNTIAGILRAEQQLLCAGSIDINKLHEITEQKNFVLTALGHTDQKRQILSKQVGIDRPYQGQPFLADLWGQLVDLTEELKHLNQHNGLLLEQHITRNSETLHFLQKNHSPTLYGADGQAQRSILAGRKIQI</sequence>
<evidence type="ECO:0000305" key="1"/>
<gene>
    <name type="primary">flgN</name>
</gene>
<accession>P96975</accession>
<reference key="1">
    <citation type="journal article" date="1997" name="Mol. Microbiol.">
        <title>A motile but non-swarming mutant of Proteus mirabilis lacks FlgN, a facilitator of flagella filament assembly.</title>
        <authorList>
            <person name="Gygi D."/>
            <person name="Fraser G."/>
            <person name="Dufour A."/>
            <person name="Hughes C."/>
        </authorList>
    </citation>
    <scope>NUCLEOTIDE SEQUENCE [GENOMIC DNA]</scope>
    <source>
        <strain>U6540</strain>
    </source>
</reference>